<proteinExistence type="evidence at protein level"/>
<sequence length="296" mass="35245">MMDSSEHDYYEYFDEFRGILLYKQFIKYWDNVEAFQARPDDLVIAAYPKSGTTWISEVVCMIYAEGDVKKCRQDAIFNRVPFLECRNDKMMNGVKQLEEMNSPRIIKTHLPPRLLPASFWEKRCKMICICRNAKDVAVSYYYFFLMVANHPDPGSFPEFVEKFMQGQVPYGSWYDHVKSWWEKSTDPRILFIFYEDMKEDIRKEVLKLIHFLGRKPSEELVDKIIKHTSFQEMKNNPSTNYTMLPEEIMNQKVSPFMRKGISGDWKNHFTVALNESFDKHYQQQMKGSTLQLRTEI</sequence>
<name>ST1E1_CAVPO</name>
<organism>
    <name type="scientific">Cavia porcellus</name>
    <name type="common">Guinea pig</name>
    <dbReference type="NCBI Taxonomy" id="10141"/>
    <lineage>
        <taxon>Eukaryota</taxon>
        <taxon>Metazoa</taxon>
        <taxon>Chordata</taxon>
        <taxon>Craniata</taxon>
        <taxon>Vertebrata</taxon>
        <taxon>Euteleostomi</taxon>
        <taxon>Mammalia</taxon>
        <taxon>Eutheria</taxon>
        <taxon>Euarchontoglires</taxon>
        <taxon>Glires</taxon>
        <taxon>Rodentia</taxon>
        <taxon>Hystricomorpha</taxon>
        <taxon>Caviidae</taxon>
        <taxon>Cavia</taxon>
    </lineage>
</organism>
<evidence type="ECO:0000250" key="1">
    <source>
        <dbReference type="UniProtKB" id="P49888"/>
    </source>
</evidence>
<evidence type="ECO:0000250" key="2">
    <source>
        <dbReference type="UniProtKB" id="P49891"/>
    </source>
</evidence>
<evidence type="ECO:0000269" key="3">
    <source>
    </source>
</evidence>
<evidence type="ECO:0000269" key="4">
    <source>
    </source>
</evidence>
<evidence type="ECO:0000303" key="5">
    <source>
    </source>
</evidence>
<evidence type="ECO:0000305" key="6"/>
<evidence type="ECO:0000305" key="7">
    <source>
    </source>
</evidence>
<evidence type="ECO:0000305" key="8">
    <source>
    </source>
</evidence>
<protein>
    <recommendedName>
        <fullName>Sulfotransferase 1E1</fullName>
        <shortName>ST1E1</shortName>
        <ecNumber evidence="4">2.8.2.4</ecNumber>
    </recommendedName>
    <alternativeName>
        <fullName evidence="5">Estrogen sulfotransferase</fullName>
    </alternativeName>
    <alternativeName>
        <fullName>ST1E3</fullName>
    </alternativeName>
    <alternativeName>
        <fullName>Sulfotransferase, estrogen-preferring</fullName>
    </alternativeName>
</protein>
<reference key="1">
    <citation type="journal article" date="1992" name="Mol. Endocrinol.">
        <title>Molecular cloning and expression of a full-length complementary DNA encoding the guinea pig adrenocortical estrogen sulfotransferase.</title>
        <authorList>
            <person name="Oeda T."/>
            <person name="Lee Y.C."/>
            <person name="Driscoll W.J."/>
            <person name="Chen H.-C."/>
            <person name="Strott C.A."/>
        </authorList>
    </citation>
    <scope>NUCLEOTIDE SEQUENCE [MRNA]</scope>
    <scope>PARTIAL PROTEIN SEQUENCE</scope>
    <scope>TISSUE SPECIFICITY</scope>
    <scope>CATALYTIC ACTIVITY</scope>
    <scope>SUBCELLULAR LOCATION</scope>
    <source>
        <strain>NIH 2</strain>
        <tissue>Adrenal cortex</tissue>
    </source>
</reference>
<reference key="2">
    <citation type="journal article" date="1994" name="Biochem. Biophys. Res. Commun.">
        <title>A P-loop related motif (GxxGxxK) highly conserved in sulfotransferases is required for binding the activated sulfate donor.</title>
        <authorList>
            <person name="Komatsu K."/>
            <person name="Driscoll W.J."/>
            <person name="Koh Y."/>
            <person name="Strott C.A."/>
        </authorList>
    </citation>
    <scope>PAPS-BINDING SITE</scope>
    <scope>MUTAGENESIS OF GLY-260; SER-262; GLY-263; ASP-264; LYS-266 AND ASN-267</scope>
    <scope>SUBCELLULAR LOCATION</scope>
    <scope>BIOPHYSICOCHEMICAL PROPERTIES</scope>
    <scope>FUNCTION</scope>
    <scope>CATALYTIC ACTIVITY</scope>
</reference>
<gene>
    <name type="primary">SULT1E1</name>
    <name evidence="5" type="synonym">EST</name>
    <name type="synonym">STE</name>
</gene>
<feature type="chain" id="PRO_0000085152" description="Sulfotransferase 1E1">
    <location>
        <begin position="1"/>
        <end position="296"/>
    </location>
</feature>
<feature type="active site" description="Proton acceptor" evidence="2">
    <location>
        <position position="109"/>
    </location>
</feature>
<feature type="binding site" evidence="2">
    <location>
        <begin position="49"/>
        <end position="54"/>
    </location>
    <ligand>
        <name>3'-phosphoadenylyl sulfate</name>
        <dbReference type="ChEBI" id="CHEBI:58339"/>
    </ligand>
</feature>
<feature type="binding site" evidence="2">
    <location>
        <begin position="107"/>
        <end position="109"/>
    </location>
    <ligand>
        <name>substrate</name>
    </ligand>
</feature>
<feature type="binding site" evidence="2">
    <location>
        <position position="131"/>
    </location>
    <ligand>
        <name>3'-phosphoadenylyl sulfate</name>
        <dbReference type="ChEBI" id="CHEBI:58339"/>
    </ligand>
</feature>
<feature type="binding site" evidence="2">
    <location>
        <position position="139"/>
    </location>
    <ligand>
        <name>3'-phosphoadenylyl sulfate</name>
        <dbReference type="ChEBI" id="CHEBI:58339"/>
    </ligand>
</feature>
<feature type="binding site" evidence="2">
    <location>
        <position position="194"/>
    </location>
    <ligand>
        <name>3'-phosphoadenylyl sulfate</name>
        <dbReference type="ChEBI" id="CHEBI:58339"/>
    </ligand>
</feature>
<feature type="binding site" evidence="2">
    <location>
        <begin position="228"/>
        <end position="233"/>
    </location>
    <ligand>
        <name>3'-phosphoadenylyl sulfate</name>
        <dbReference type="ChEBI" id="CHEBI:58339"/>
    </ligand>
</feature>
<feature type="binding site" evidence="2">
    <location>
        <begin position="258"/>
        <end position="260"/>
    </location>
    <ligand>
        <name>3'-phosphoadenylyl sulfate</name>
        <dbReference type="ChEBI" id="CHEBI:58339"/>
    </ligand>
</feature>
<feature type="mutagenesis site" description="Loss of sulfotransferase activity; when associated with A-263 and A-266. Does not bind PAPS; when associated with A-263 and A-266." evidence="4">
    <original>G</original>
    <variation>A</variation>
    <location>
        <position position="260"/>
    </location>
</feature>
<feature type="mutagenesis site" description="Decreased of sulfotransferase activity; when associated with A-264 and A-267. Increased KM for PAPS; when associated with A-264 and A-267." evidence="4">
    <original>S</original>
    <variation>A</variation>
    <location>
        <position position="262"/>
    </location>
</feature>
<feature type="mutagenesis site" description="Loss of sulfotransferase activity; when associated with A-260 and A-266. Does not bind PAPS; when associated with A-260 and A-266." evidence="4">
    <original>G</original>
    <variation>A</variation>
    <location>
        <position position="263"/>
    </location>
</feature>
<feature type="mutagenesis site" description="Decreased of sulfotransferase activity; when associated with A-262 and A-267; Increased KM for PAPS; when associated with A-262 and A-267." evidence="4">
    <original>D</original>
    <variation>A</variation>
    <location>
        <position position="264"/>
    </location>
</feature>
<feature type="mutagenesis site" description="Loss of sulfotransferase activity; when associated with A-260 and A-263. Does not bind PAPS; when associated with A-260 and A-263." evidence="4">
    <original>K</original>
    <variation>A</variation>
    <location>
        <position position="266"/>
    </location>
</feature>
<feature type="mutagenesis site" description="Decreased of sulfotransferase activity; when associated with A-262 and A-264. Increased KM for PAPS when associated with A-262 and A-264." evidence="4">
    <original>N</original>
    <variation>A</variation>
    <location>
        <position position="267"/>
    </location>
</feature>
<dbReference type="EC" id="2.8.2.4" evidence="4"/>
<dbReference type="EMBL" id="U09552">
    <property type="protein sequence ID" value="AAA18495.1"/>
    <property type="molecule type" value="mRNA"/>
</dbReference>
<dbReference type="PIR" id="A44011">
    <property type="entry name" value="A44011"/>
</dbReference>
<dbReference type="RefSeq" id="NP_001166493.1">
    <property type="nucleotide sequence ID" value="NM_001173022.1"/>
</dbReference>
<dbReference type="SMR" id="P49887"/>
<dbReference type="FunCoup" id="P49887">
    <property type="interactions" value="259"/>
</dbReference>
<dbReference type="STRING" id="10141.ENSCPOP00000011973"/>
<dbReference type="Ensembl" id="ENSCPOT00000013429.3">
    <property type="protein sequence ID" value="ENSCPOP00000011973.2"/>
    <property type="gene ID" value="ENSCPOG00000013300.4"/>
</dbReference>
<dbReference type="GeneID" id="100135625"/>
<dbReference type="KEGG" id="cpoc:100135625"/>
<dbReference type="CTD" id="6783"/>
<dbReference type="VEuPathDB" id="HostDB:ENSCPOG00000013300"/>
<dbReference type="eggNOG" id="KOG1584">
    <property type="taxonomic scope" value="Eukaryota"/>
</dbReference>
<dbReference type="GeneTree" id="ENSGT00940000162261"/>
<dbReference type="HOGENOM" id="CLU_027239_1_2_1"/>
<dbReference type="InParanoid" id="P49887"/>
<dbReference type="OMA" id="VIKVIQF"/>
<dbReference type="OrthoDB" id="205623at2759"/>
<dbReference type="TreeFam" id="TF321745"/>
<dbReference type="SABIO-RK" id="P49887"/>
<dbReference type="Proteomes" id="UP000005447">
    <property type="component" value="Unassembled WGS sequence"/>
</dbReference>
<dbReference type="Bgee" id="ENSCPOG00000013300">
    <property type="expression patterns" value="Expressed in adrenal gland and 5 other cell types or tissues"/>
</dbReference>
<dbReference type="GO" id="GO:0005829">
    <property type="term" value="C:cytosol"/>
    <property type="evidence" value="ECO:0000314"/>
    <property type="project" value="UniProtKB"/>
</dbReference>
<dbReference type="GO" id="GO:0031965">
    <property type="term" value="C:nuclear membrane"/>
    <property type="evidence" value="ECO:0007669"/>
    <property type="project" value="Ensembl"/>
</dbReference>
<dbReference type="GO" id="GO:0004304">
    <property type="term" value="F:estrone sulfotransferase activity"/>
    <property type="evidence" value="ECO:0007669"/>
    <property type="project" value="UniProtKB-EC"/>
</dbReference>
<dbReference type="GO" id="GO:0047894">
    <property type="term" value="F:flavonol 3-sulfotransferase activity"/>
    <property type="evidence" value="ECO:0007669"/>
    <property type="project" value="Ensembl"/>
</dbReference>
<dbReference type="GO" id="GO:0005496">
    <property type="term" value="F:steroid binding"/>
    <property type="evidence" value="ECO:0007669"/>
    <property type="project" value="UniProtKB-KW"/>
</dbReference>
<dbReference type="GO" id="GO:0050294">
    <property type="term" value="F:steroid sulfotransferase activity"/>
    <property type="evidence" value="ECO:0000250"/>
    <property type="project" value="UniProtKB"/>
</dbReference>
<dbReference type="GO" id="GO:0050427">
    <property type="term" value="P:3'-phosphoadenosine 5'-phosphosulfate metabolic process"/>
    <property type="evidence" value="ECO:0007669"/>
    <property type="project" value="Ensembl"/>
</dbReference>
<dbReference type="GO" id="GO:0006711">
    <property type="term" value="P:estrogen catabolic process"/>
    <property type="evidence" value="ECO:0007669"/>
    <property type="project" value="Ensembl"/>
</dbReference>
<dbReference type="GO" id="GO:0008210">
    <property type="term" value="P:estrogen metabolic process"/>
    <property type="evidence" value="ECO:0000250"/>
    <property type="project" value="UniProtKB"/>
</dbReference>
<dbReference type="GO" id="GO:0006068">
    <property type="term" value="P:ethanol catabolic process"/>
    <property type="evidence" value="ECO:0007669"/>
    <property type="project" value="Ensembl"/>
</dbReference>
<dbReference type="GO" id="GO:0045600">
    <property type="term" value="P:positive regulation of fat cell differentiation"/>
    <property type="evidence" value="ECO:0007669"/>
    <property type="project" value="Ensembl"/>
</dbReference>
<dbReference type="GO" id="GO:0051923">
    <property type="term" value="P:sulfation"/>
    <property type="evidence" value="ECO:0007669"/>
    <property type="project" value="Ensembl"/>
</dbReference>
<dbReference type="FunFam" id="3.40.50.300:FF:000433">
    <property type="entry name" value="Estrogen sulfotransferase"/>
    <property type="match status" value="1"/>
</dbReference>
<dbReference type="Gene3D" id="3.40.50.300">
    <property type="entry name" value="P-loop containing nucleotide triphosphate hydrolases"/>
    <property type="match status" value="1"/>
</dbReference>
<dbReference type="InterPro" id="IPR027417">
    <property type="entry name" value="P-loop_NTPase"/>
</dbReference>
<dbReference type="InterPro" id="IPR000863">
    <property type="entry name" value="Sulfotransferase_dom"/>
</dbReference>
<dbReference type="PANTHER" id="PTHR11783">
    <property type="entry name" value="SULFOTRANSFERASE SULT"/>
    <property type="match status" value="1"/>
</dbReference>
<dbReference type="Pfam" id="PF00685">
    <property type="entry name" value="Sulfotransfer_1"/>
    <property type="match status" value="1"/>
</dbReference>
<dbReference type="SUPFAM" id="SSF52540">
    <property type="entry name" value="P-loop containing nucleoside triphosphate hydrolases"/>
    <property type="match status" value="1"/>
</dbReference>
<comment type="function">
    <text evidence="1 3 4">Sulfotransferase that utilizes 3'-phospho-5'-adenylyl sulfate (PAPS) as sulfonate donor to catalyze the sulfate conjugation of estradiol and estrone (PubMed:1406700, PubMed:7980593). Is a key enzyme in estrogen homeostasis, the sulfation of estrogens leads to their inactivation. Also sulfates dehydroepiandrosterone (DHEA), pregnenolone, (24S)-hydroxycholesteroland xenobiotic compounds like ethinylestradiol, equalenin, diethyl stilbesterol and 1-naphthol at significantly lower efficiency. Does not sulfonate cortisol, testosterone and dopamine (By similarity). May play a role in gut microbiota-host metabolic interaction. O-sulfonates 4-ethylphenol (4-EP), a dietary tyrosine-derived metabolite produced by gut bacteria. The product 4-EPS crosses the blood-brain barrier and may negatively regulate oligodendrocyte maturation and myelination, affecting the functional connectivity of different brain regions associated with the limbic system.</text>
</comment>
<comment type="catalytic activity">
    <reaction evidence="4">
        <text>estrone + 3'-phosphoadenylyl sulfate = estrone 3-sulfate + adenosine 3',5'-bisphosphate + H(+)</text>
        <dbReference type="Rhea" id="RHEA:15973"/>
        <dbReference type="ChEBI" id="CHEBI:15378"/>
        <dbReference type="ChEBI" id="CHEBI:17263"/>
        <dbReference type="ChEBI" id="CHEBI:58339"/>
        <dbReference type="ChEBI" id="CHEBI:58343"/>
        <dbReference type="ChEBI" id="CHEBI:60050"/>
        <dbReference type="EC" id="2.8.2.4"/>
    </reaction>
    <physiologicalReaction direction="left-to-right" evidence="8">
        <dbReference type="Rhea" id="RHEA:15974"/>
    </physiologicalReaction>
</comment>
<comment type="catalytic activity">
    <reaction evidence="1">
        <text>(24S)-hydroxycholesterol + 3'-phosphoadenylyl sulfate = (24S)-hydroxycholesterol 3-sulfate + adenosine 3',5'-bisphosphate + H(+)</text>
        <dbReference type="Rhea" id="RHEA:52348"/>
        <dbReference type="ChEBI" id="CHEBI:15378"/>
        <dbReference type="ChEBI" id="CHEBI:34310"/>
        <dbReference type="ChEBI" id="CHEBI:58339"/>
        <dbReference type="ChEBI" id="CHEBI:58343"/>
        <dbReference type="ChEBI" id="CHEBI:136567"/>
    </reaction>
    <physiologicalReaction direction="left-to-right" evidence="1">
        <dbReference type="Rhea" id="RHEA:52349"/>
    </physiologicalReaction>
</comment>
<comment type="catalytic activity">
    <reaction evidence="3">
        <text>17beta-estradiol + 3'-phosphoadenylyl sulfate = 17beta-estradiol 3-sulfate + adenosine 3',5'-bisphosphate + H(+)</text>
        <dbReference type="Rhea" id="RHEA:52372"/>
        <dbReference type="ChEBI" id="CHEBI:15378"/>
        <dbReference type="ChEBI" id="CHEBI:16469"/>
        <dbReference type="ChEBI" id="CHEBI:58339"/>
        <dbReference type="ChEBI" id="CHEBI:58343"/>
        <dbReference type="ChEBI" id="CHEBI:136582"/>
    </reaction>
    <physiologicalReaction direction="left-to-right" evidence="7">
        <dbReference type="Rhea" id="RHEA:52373"/>
    </physiologicalReaction>
</comment>
<comment type="catalytic activity">
    <reaction evidence="1">
        <text>3beta-hydroxyandrost-5-en-17-one + 3'-phosphoadenylyl sulfate = dehydroepiandrosterone 3-sulfate + adenosine 3',5'-bisphosphate + H(+)</text>
        <dbReference type="Rhea" id="RHEA:51216"/>
        <dbReference type="ChEBI" id="CHEBI:15378"/>
        <dbReference type="ChEBI" id="CHEBI:28689"/>
        <dbReference type="ChEBI" id="CHEBI:57905"/>
        <dbReference type="ChEBI" id="CHEBI:58339"/>
        <dbReference type="ChEBI" id="CHEBI:58343"/>
    </reaction>
</comment>
<comment type="catalytic activity">
    <reaction evidence="1">
        <text>4-ethylphenol + 3'-phosphoadenylyl sulfate = 4-ethylphenyl sulfate + adenosine 3',5'-bisphosphate + H(+)</text>
        <dbReference type="Rhea" id="RHEA:70607"/>
        <dbReference type="ChEBI" id="CHEBI:15378"/>
        <dbReference type="ChEBI" id="CHEBI:49584"/>
        <dbReference type="ChEBI" id="CHEBI:58339"/>
        <dbReference type="ChEBI" id="CHEBI:58343"/>
        <dbReference type="ChEBI" id="CHEBI:133681"/>
    </reaction>
    <physiologicalReaction direction="left-to-right" evidence="1">
        <dbReference type="Rhea" id="RHEA:70608"/>
    </physiologicalReaction>
</comment>
<comment type="activity regulation">
    <text evidence="1">Inhibited by estradiol.</text>
</comment>
<comment type="biophysicochemical properties">
    <kinetics>
        <KM evidence="4">5 uM for PAPS</KM>
    </kinetics>
</comment>
<comment type="subunit">
    <text evidence="1">Homodimer.</text>
</comment>
<comment type="subcellular location">
    <subcellularLocation>
        <location evidence="3 4">Cytoplasm</location>
        <location evidence="3 4">Cytosol</location>
    </subcellularLocation>
</comment>
<comment type="tissue specificity">
    <text evidence="3">Adrenal gland and much less in liver (PubMed:1406700). Detectable only during pregnancy in uterine (PubMed:1406700).</text>
</comment>
<comment type="PTM">
    <text>The N-terminus is blocked.</text>
</comment>
<comment type="similarity">
    <text evidence="6">Belongs to the sulfotransferase 1 family.</text>
</comment>
<keyword id="KW-0963">Cytoplasm</keyword>
<keyword id="KW-0903">Direct protein sequencing</keyword>
<keyword id="KW-0443">Lipid metabolism</keyword>
<keyword id="KW-0446">Lipid-binding</keyword>
<keyword id="KW-1185">Reference proteome</keyword>
<keyword id="KW-0754">Steroid-binding</keyword>
<keyword id="KW-0808">Transferase</keyword>
<accession>P49887</accession>